<name>KHSE_RHOP5</name>
<sequence>MAVYTDVAADDLAEFLLAYDIGELLSYKGIAEGVENTNFLLHTSRGSFILTLYEKRVAAEDLPYFLSLMAHLASRGVSCPQPEKNRDGEICGTLSGRPAVIINFLEGVWPRRPNVAQCAGVGEALAKMHLAGRDFPLVRKNPLSVKGWWALFEQAASGADPLQHGLRALLHAELDHLDHAWPKHLPEGVIHADLFPDNVFFIGDKLSGLIDFPFACNDILAYDVAICLNAWCFEPDHSFNVTKARAFLNGYNRGRPLEAAEQDALPLLARGAALRFLLTRLVDSLNVPAGALVRPKDPLEYARKLRFHQSVNSIRDYGVETSGLVA</sequence>
<reference key="1">
    <citation type="submission" date="2006-09" db="EMBL/GenBank/DDBJ databases">
        <title>Complete sequence of Rhodopseudomonas palustris BisA53.</title>
        <authorList>
            <consortium name="US DOE Joint Genome Institute"/>
            <person name="Copeland A."/>
            <person name="Lucas S."/>
            <person name="Lapidus A."/>
            <person name="Barry K."/>
            <person name="Detter J.C."/>
            <person name="Glavina del Rio T."/>
            <person name="Hammon N."/>
            <person name="Israni S."/>
            <person name="Dalin E."/>
            <person name="Tice H."/>
            <person name="Pitluck S."/>
            <person name="Chain P."/>
            <person name="Malfatti S."/>
            <person name="Shin M."/>
            <person name="Vergez L."/>
            <person name="Schmutz J."/>
            <person name="Larimer F."/>
            <person name="Land M."/>
            <person name="Hauser L."/>
            <person name="Pelletier D.A."/>
            <person name="Kyrpides N."/>
            <person name="Kim E."/>
            <person name="Harwood C.S."/>
            <person name="Oda Y."/>
            <person name="Richardson P."/>
        </authorList>
    </citation>
    <scope>NUCLEOTIDE SEQUENCE [LARGE SCALE GENOMIC DNA]</scope>
    <source>
        <strain>BisA53</strain>
    </source>
</reference>
<protein>
    <recommendedName>
        <fullName evidence="1">Homoserine kinase</fullName>
        <shortName evidence="1">HK</shortName>
        <shortName evidence="1">HSK</shortName>
        <ecNumber evidence="1">2.7.1.39</ecNumber>
    </recommendedName>
</protein>
<proteinExistence type="inferred from homology"/>
<organism>
    <name type="scientific">Rhodopseudomonas palustris (strain BisA53)</name>
    <dbReference type="NCBI Taxonomy" id="316055"/>
    <lineage>
        <taxon>Bacteria</taxon>
        <taxon>Pseudomonadati</taxon>
        <taxon>Pseudomonadota</taxon>
        <taxon>Alphaproteobacteria</taxon>
        <taxon>Hyphomicrobiales</taxon>
        <taxon>Nitrobacteraceae</taxon>
        <taxon>Rhodopseudomonas</taxon>
    </lineage>
</organism>
<gene>
    <name evidence="1" type="primary">thrB</name>
    <name type="ordered locus">RPE_4129</name>
</gene>
<comment type="catalytic activity">
    <reaction evidence="1">
        <text>L-homoserine + ATP = O-phospho-L-homoserine + ADP + H(+)</text>
        <dbReference type="Rhea" id="RHEA:13985"/>
        <dbReference type="ChEBI" id="CHEBI:15378"/>
        <dbReference type="ChEBI" id="CHEBI:30616"/>
        <dbReference type="ChEBI" id="CHEBI:57476"/>
        <dbReference type="ChEBI" id="CHEBI:57590"/>
        <dbReference type="ChEBI" id="CHEBI:456216"/>
        <dbReference type="EC" id="2.7.1.39"/>
    </reaction>
</comment>
<comment type="pathway">
    <text evidence="1">Amino-acid biosynthesis; L-threonine biosynthesis; L-threonine from L-aspartate: step 4/5.</text>
</comment>
<comment type="similarity">
    <text evidence="1">Belongs to the pseudomonas-type ThrB family.</text>
</comment>
<feature type="chain" id="PRO_0000300803" description="Homoserine kinase">
    <location>
        <begin position="1"/>
        <end position="326"/>
    </location>
</feature>
<evidence type="ECO:0000255" key="1">
    <source>
        <dbReference type="HAMAP-Rule" id="MF_00301"/>
    </source>
</evidence>
<dbReference type="EC" id="2.7.1.39" evidence="1"/>
<dbReference type="EMBL" id="CP000463">
    <property type="protein sequence ID" value="ABJ08055.1"/>
    <property type="molecule type" value="Genomic_DNA"/>
</dbReference>
<dbReference type="SMR" id="Q07J29"/>
<dbReference type="STRING" id="316055.RPE_4129"/>
<dbReference type="KEGG" id="rpe:RPE_4129"/>
<dbReference type="eggNOG" id="COG2334">
    <property type="taxonomic scope" value="Bacteria"/>
</dbReference>
<dbReference type="HOGENOM" id="CLU_053300_1_0_5"/>
<dbReference type="OrthoDB" id="9777460at2"/>
<dbReference type="UniPathway" id="UPA00050">
    <property type="reaction ID" value="UER00064"/>
</dbReference>
<dbReference type="GO" id="GO:0005524">
    <property type="term" value="F:ATP binding"/>
    <property type="evidence" value="ECO:0007669"/>
    <property type="project" value="UniProtKB-KW"/>
</dbReference>
<dbReference type="GO" id="GO:0004413">
    <property type="term" value="F:homoserine kinase activity"/>
    <property type="evidence" value="ECO:0007669"/>
    <property type="project" value="UniProtKB-UniRule"/>
</dbReference>
<dbReference type="GO" id="GO:0009088">
    <property type="term" value="P:threonine biosynthetic process"/>
    <property type="evidence" value="ECO:0007669"/>
    <property type="project" value="UniProtKB-UniRule"/>
</dbReference>
<dbReference type="CDD" id="cd05153">
    <property type="entry name" value="HomoserineK_II"/>
    <property type="match status" value="1"/>
</dbReference>
<dbReference type="FunFam" id="3.90.1200.10:FF:000041">
    <property type="entry name" value="Homoserine kinase"/>
    <property type="match status" value="1"/>
</dbReference>
<dbReference type="Gene3D" id="3.90.1200.10">
    <property type="match status" value="1"/>
</dbReference>
<dbReference type="Gene3D" id="3.30.200.20">
    <property type="entry name" value="Phosphorylase Kinase, domain 1"/>
    <property type="match status" value="1"/>
</dbReference>
<dbReference type="HAMAP" id="MF_00301">
    <property type="entry name" value="Homoser_kinase_2"/>
    <property type="match status" value="1"/>
</dbReference>
<dbReference type="InterPro" id="IPR002575">
    <property type="entry name" value="Aminoglycoside_PTrfase"/>
</dbReference>
<dbReference type="InterPro" id="IPR005280">
    <property type="entry name" value="Homoserine_kinase_II"/>
</dbReference>
<dbReference type="InterPro" id="IPR011009">
    <property type="entry name" value="Kinase-like_dom_sf"/>
</dbReference>
<dbReference type="InterPro" id="IPR050249">
    <property type="entry name" value="Pseudomonas-type_ThrB"/>
</dbReference>
<dbReference type="NCBIfam" id="NF003558">
    <property type="entry name" value="PRK05231.1"/>
    <property type="match status" value="1"/>
</dbReference>
<dbReference type="NCBIfam" id="TIGR00938">
    <property type="entry name" value="thrB_alt"/>
    <property type="match status" value="1"/>
</dbReference>
<dbReference type="PANTHER" id="PTHR21064:SF6">
    <property type="entry name" value="AMINOGLYCOSIDE PHOSPHOTRANSFERASE DOMAIN-CONTAINING PROTEIN"/>
    <property type="match status" value="1"/>
</dbReference>
<dbReference type="PANTHER" id="PTHR21064">
    <property type="entry name" value="AMINOGLYCOSIDE PHOSPHOTRANSFERASE DOMAIN-CONTAINING PROTEIN-RELATED"/>
    <property type="match status" value="1"/>
</dbReference>
<dbReference type="Pfam" id="PF01636">
    <property type="entry name" value="APH"/>
    <property type="match status" value="1"/>
</dbReference>
<dbReference type="SUPFAM" id="SSF56112">
    <property type="entry name" value="Protein kinase-like (PK-like)"/>
    <property type="match status" value="1"/>
</dbReference>
<accession>Q07J29</accession>
<keyword id="KW-0028">Amino-acid biosynthesis</keyword>
<keyword id="KW-0067">ATP-binding</keyword>
<keyword id="KW-0418">Kinase</keyword>
<keyword id="KW-0547">Nucleotide-binding</keyword>
<keyword id="KW-0791">Threonine biosynthesis</keyword>
<keyword id="KW-0808">Transferase</keyword>